<organism>
    <name type="scientific">Escherichia phage lambda</name>
    <name type="common">Bacteriophage lambda</name>
    <dbReference type="NCBI Taxonomy" id="2681611"/>
    <lineage>
        <taxon>Viruses</taxon>
        <taxon>Duplodnaviria</taxon>
        <taxon>Heunggongvirae</taxon>
        <taxon>Uroviricota</taxon>
        <taxon>Caudoviricetes</taxon>
        <taxon>Lambdavirus</taxon>
        <taxon>Lambdavirus lambda</taxon>
    </lineage>
</organism>
<organismHost>
    <name type="scientific">Escherichia coli</name>
    <dbReference type="NCBI Taxonomy" id="562"/>
</organismHost>
<evidence type="ECO:0000255" key="1"/>
<evidence type="ECO:0000255" key="2">
    <source>
        <dbReference type="HAMAP-Rule" id="MF_04137"/>
    </source>
</evidence>
<evidence type="ECO:0000269" key="3">
    <source>
    </source>
</evidence>
<evidence type="ECO:0000269" key="4">
    <source>
    </source>
</evidence>
<evidence type="ECO:0000269" key="5">
    <source>
    </source>
</evidence>
<evidence type="ECO:0000269" key="6">
    <source>
    </source>
</evidence>
<evidence type="ECO:0000269" key="7">
    <source>
    </source>
</evidence>
<evidence type="ECO:0000269" key="8">
    <source>
    </source>
</evidence>
<evidence type="ECO:0000303" key="9">
    <source>
    </source>
</evidence>
<evidence type="ECO:0000303" key="10">
    <source>
    </source>
</evidence>
<evidence type="ECO:0000305" key="11">
    <source>
    </source>
</evidence>
<keyword id="KW-0175">Coiled coil</keyword>
<keyword id="KW-0204">Cytolysis</keyword>
<keyword id="KW-1015">Disulfide bond</keyword>
<keyword id="KW-1030">Host cell inner membrane</keyword>
<keyword id="KW-0578">Host cell lysis by virus</keyword>
<keyword id="KW-1032">Host cell membrane</keyword>
<keyword id="KW-1043">Host membrane</keyword>
<keyword id="KW-0472">Membrane</keyword>
<keyword id="KW-1185">Reference proteome</keyword>
<keyword id="KW-0735">Signal-anchor</keyword>
<keyword id="KW-0812">Transmembrane</keyword>
<keyword id="KW-1133">Transmembrane helix</keyword>
<keyword id="KW-1188">Viral release from host cell</keyword>
<gene>
    <name type="primary">Rz</name>
</gene>
<name>SPAN1_LAMBD</name>
<accession>P00726</accession>
<sequence length="153" mass="17230">MSRVTAIISALVICIIVCLSWAVNHYRDNAITYKAQRDKNARELKLANAAITDMQMRQRDVAALDAKYTKELADAKAENDALRDDVAAGRRRLHIKAVCQSVREATTASGVDNAASPRLADTAERDYFTLRERLITMQKQLEGTQKYINEQCR</sequence>
<reference key="1">
    <citation type="journal article" date="1982" name="J. Mol. Biol.">
        <title>Nucleotide sequence of bacteriophage lambda DNA.</title>
        <authorList>
            <person name="Sanger F."/>
            <person name="Coulson A.R."/>
            <person name="Hong G.F."/>
            <person name="Hill D.F."/>
            <person name="Petersen G.B."/>
        </authorList>
    </citation>
    <scope>NUCLEOTIDE SEQUENCE [GENOMIC DNA]</scope>
</reference>
<reference key="2">
    <citation type="journal article" date="2008" name="Mol. Microbiol.">
        <title>The final step in the phage infection cycle: the Rz and Rz1 lysis proteins link the inner and outer membranes.</title>
        <authorList>
            <person name="Berry J."/>
            <person name="Summer E.J."/>
            <person name="Struck D.K."/>
            <person name="Young R."/>
        </authorList>
    </citation>
    <scope>CHARACTERIZATION</scope>
    <scope>SUBCELLULAR LOCATION</scope>
</reference>
<reference key="3">
    <citation type="journal article" date="2010" name="Protein Sci.">
        <title>The lambda spanin components Rz and Rz1 undergo tertiary and quaternary rearrangements upon complex formation.</title>
        <authorList>
            <person name="Berry J."/>
            <person name="Savva C."/>
            <person name="Holzenburg A."/>
            <person name="Young R."/>
        </authorList>
    </citation>
    <scope>INTERACTION WITH SPANIN OUTER LIPOPROTEIN SUBUNIT</scope>
</reference>
<reference key="4">
    <citation type="journal article" date="2012" name="J. Bacteriol.">
        <title>The spanin complex is essential for lambda lysis.</title>
        <authorList>
            <person name="Berry J."/>
            <person name="Rajaure M."/>
            <person name="Pang T."/>
            <person name="Young R."/>
        </authorList>
    </citation>
    <scope>FUNCTION</scope>
</reference>
<reference key="5">
    <citation type="journal article" date="2013" name="Mol. Microbiol.">
        <title>Spanin function requires subunit homodimerization through intermolecular disulfide bonds.</title>
        <authorList>
            <person name="Berry J.D."/>
            <person name="Rajaure M."/>
            <person name="Young R."/>
        </authorList>
    </citation>
    <scope>FUNCTION</scope>
    <scope>SUBUNIT</scope>
    <scope>DISULFIDE BOND</scope>
    <scope>SUBCELLULAR LOCATION</scope>
    <scope>MUTAGENESIS OF CYS-99 AND CYS-152</scope>
</reference>
<reference key="6">
    <citation type="journal article" date="2013" name="Curr. Opin. Microbiol.">
        <title>Phage lysis: do we have the hole story yet?</title>
        <authorList>
            <person name="Young R."/>
        </authorList>
    </citation>
    <scope>REVIEW</scope>
</reference>
<reference key="7">
    <citation type="journal article" date="2015" name="Proc. Natl. Acad. Sci. U.S.A.">
        <title>Membrane fusion during phage lysis.</title>
        <authorList>
            <person name="Rajaure M."/>
            <person name="Berry J."/>
            <person name="Kongari R."/>
            <person name="Cahill J."/>
            <person name="Young R."/>
        </authorList>
    </citation>
    <scope>FUNCTION</scope>
</reference>
<reference key="8">
    <citation type="journal article" date="2017" name="G3 (Bethesda)">
        <title>Genetic Analysis of the Lambda Spanins Rz and Rz1: Identification of Functional Domains.</title>
        <authorList>
            <person name="Cahill J."/>
            <person name="Rajaure M."/>
            <person name="O'Leary C."/>
            <person name="Sloan J."/>
            <person name="Marrufo A."/>
            <person name="Holt A."/>
            <person name="Kulkarni A."/>
            <person name="Hernandez O."/>
            <person name="Young R."/>
        </authorList>
    </citation>
    <scope>DOMAIN</scope>
</reference>
<proteinExistence type="evidence at protein level"/>
<dbReference type="EMBL" id="J02459">
    <property type="protein sequence ID" value="AAA96599.1"/>
    <property type="molecule type" value="Genomic_DNA"/>
</dbReference>
<dbReference type="PIR" id="A94614">
    <property type="entry name" value="APBPML"/>
</dbReference>
<dbReference type="RefSeq" id="NP_040646.1">
    <property type="nucleotide sequence ID" value="NC_001416.1"/>
</dbReference>
<dbReference type="SMR" id="P00726"/>
<dbReference type="MEROPS" id="X19.001"/>
<dbReference type="TCDB" id="1.M.1.1.1">
    <property type="family name" value="the rz/rz1 spanin1 (rz(1)) family"/>
</dbReference>
<dbReference type="GeneID" id="2703481"/>
<dbReference type="KEGG" id="vg:2703481"/>
<dbReference type="Proteomes" id="UP000001711">
    <property type="component" value="Genome"/>
</dbReference>
<dbReference type="GO" id="GO:0020002">
    <property type="term" value="C:host cell plasma membrane"/>
    <property type="evidence" value="ECO:0007669"/>
    <property type="project" value="UniProtKB-SubCell"/>
</dbReference>
<dbReference type="GO" id="GO:0016020">
    <property type="term" value="C:membrane"/>
    <property type="evidence" value="ECO:0007669"/>
    <property type="project" value="UniProtKB-KW"/>
</dbReference>
<dbReference type="GO" id="GO:0061025">
    <property type="term" value="P:membrane fusion"/>
    <property type="evidence" value="ECO:0000314"/>
    <property type="project" value="CACAO"/>
</dbReference>
<dbReference type="GO" id="GO:0090680">
    <property type="term" value="P:viral release via disruption of host outer membrane"/>
    <property type="evidence" value="ECO:0000315"/>
    <property type="project" value="CACAO"/>
</dbReference>
<dbReference type="HAMAP" id="MF_04137">
    <property type="entry name" value="I_SPANIN_LAMBDA"/>
    <property type="match status" value="1"/>
</dbReference>
<dbReference type="InterPro" id="IPR004929">
    <property type="entry name" value="I-spanin"/>
</dbReference>
<dbReference type="Pfam" id="PF03245">
    <property type="entry name" value="Phage_lysis"/>
    <property type="match status" value="1"/>
</dbReference>
<comment type="function">
    <text evidence="2 5 6 7">Component of the spanin complex that disrupts the host outer membrane and participates in cell lysis during virus exit (PubMed:22904283, PubMed:23387988, PubMed:25870259). The spanin complex conducts the final step in host lysis by disrupting the outer membrane after holin and endolysin have permeabilized the inner membrane and degraded the host peptidoglycans (PubMed:25870259). Host outer membrane disruption is due to local fusion between the inner and outer membrane performed by the spanin complex (PubMed:25870259).</text>
</comment>
<comment type="subunit">
    <text evidence="2 4 6">Homodimer; disulfide-linked (PubMed:23387988). Interacts (via C-terminus) with the spanin outer lipoprotein subunit (via C-terminus) (PubMed:20734329). Part of the spanin complex which spans the entire periplasmic space (PubMed:23387988). The spanin complex is composed of one homodimer of the i-spanin linked by intermolecular disulfide bonds involving two Cys residues and one homodimer of the o-spanin covalently linked by an intermolecular disulfide bond involving one Cys (PubMed:23387988).</text>
</comment>
<comment type="subcellular location">
    <subcellularLocation>
        <location evidence="2 3">Host cell inner membrane</location>
        <topology evidence="2 3">Single-pass type II membrane protein</topology>
        <orientation evidence="2 3">Periplasmic side</orientation>
    </subcellularLocation>
</comment>
<comment type="domain">
    <text evidence="2 8">The coiled coil region is probably involved in host membrane fusion leading to lysis.</text>
</comment>
<comment type="similarity">
    <text evidence="2">Belongs to the Lambdavirus i-spanin family.</text>
</comment>
<feature type="chain" id="PRO_0000077571" description="Spanin, inner membrane subunit">
    <location>
        <begin position="1"/>
        <end position="153"/>
    </location>
</feature>
<feature type="topological domain" description="Cytoplasmic" evidence="11">
    <location>
        <begin position="1"/>
        <end position="3"/>
    </location>
</feature>
<feature type="transmembrane region" description="Helical; Signal-anchor for type II membrane protein" evidence="1">
    <location>
        <begin position="4"/>
        <end position="24"/>
    </location>
</feature>
<feature type="topological domain" description="Periplasmic" evidence="11">
    <location>
        <begin position="25"/>
        <end position="153"/>
    </location>
</feature>
<feature type="coiled-coil region" evidence="2">
    <location>
        <begin position="65"/>
        <end position="92"/>
    </location>
</feature>
<feature type="disulfide bond" description="Interchain" evidence="2 6">
    <location>
        <position position="99"/>
    </location>
</feature>
<feature type="disulfide bond" description="Interchain" evidence="2 6">
    <location>
        <position position="152"/>
    </location>
</feature>
<feature type="mutagenesis site" description="Complete loss of disulfide-linked homodimers; when associated with S-152." evidence="6">
    <original>C</original>
    <variation>S</variation>
    <location>
        <position position="99"/>
    </location>
</feature>
<feature type="mutagenesis site" description="Complete loss of disulfide-linked homodimers; when associated with S-99." evidence="6">
    <original>C</original>
    <variation>S</variation>
    <location>
        <position position="152"/>
    </location>
</feature>
<protein>
    <recommendedName>
        <fullName evidence="2">Spanin, inner membrane subunit</fullName>
        <shortName evidence="2 10">i-spanin</shortName>
    </recommendedName>
    <alternativeName>
        <fullName evidence="2 9">Lysis protein Rz</fullName>
    </alternativeName>
</protein>